<feature type="signal peptide" evidence="6">
    <location>
        <begin position="1"/>
        <end position="22"/>
    </location>
</feature>
<feature type="propeptide" id="PRO_0000439830" evidence="1">
    <location>
        <begin position="23"/>
        <end position="57"/>
    </location>
</feature>
<feature type="peptide" id="PRO_5004101955" description="Delta-conotoxin-like Bt6.4" evidence="2">
    <location>
        <begin position="58"/>
        <end position="84"/>
    </location>
</feature>
<feature type="disulfide bond" evidence="5">
    <location>
        <begin position="58"/>
        <end position="74"/>
    </location>
</feature>
<feature type="disulfide bond" evidence="5">
    <location>
        <begin position="65"/>
        <end position="78"/>
    </location>
</feature>
<feature type="disulfide bond" evidence="5">
    <location>
        <begin position="73"/>
        <end position="82"/>
    </location>
</feature>
<evidence type="ECO:0000250" key="1"/>
<evidence type="ECO:0000250" key="2">
    <source>
        <dbReference type="UniProtKB" id="A0A0F6QDA5"/>
    </source>
</evidence>
<evidence type="ECO:0000250" key="3">
    <source>
        <dbReference type="UniProtKB" id="P0DL66"/>
    </source>
</evidence>
<evidence type="ECO:0000250" key="4">
    <source>
        <dbReference type="UniProtKB" id="P0DL67"/>
    </source>
</evidence>
<evidence type="ECO:0000250" key="5">
    <source>
        <dbReference type="UniProtKB" id="P60513"/>
    </source>
</evidence>
<evidence type="ECO:0000255" key="6"/>
<evidence type="ECO:0000305" key="7"/>
<evidence type="ECO:0000312" key="8">
    <source>
        <dbReference type="EMBL" id="AGG19140.1"/>
    </source>
</evidence>
<protein>
    <recommendedName>
        <fullName evidence="8">Delta-conotoxin-like Bt6.4</fullName>
    </recommendedName>
</protein>
<reference key="1">
    <citation type="submission" date="2012-04" db="EMBL/GenBank/DDBJ databases">
        <authorList>
            <person name="Wu C."/>
            <person name="Liu Z."/>
            <person name="Dai Q."/>
        </authorList>
    </citation>
    <scope>NUCLEOTIDE SEQUENCE [MRNA]</scope>
</reference>
<organism>
    <name type="scientific">Conus betulinus</name>
    <name type="common">Beech cone</name>
    <dbReference type="NCBI Taxonomy" id="89764"/>
    <lineage>
        <taxon>Eukaryota</taxon>
        <taxon>Metazoa</taxon>
        <taxon>Spiralia</taxon>
        <taxon>Lophotrochozoa</taxon>
        <taxon>Mollusca</taxon>
        <taxon>Gastropoda</taxon>
        <taxon>Caenogastropoda</taxon>
        <taxon>Neogastropoda</taxon>
        <taxon>Conoidea</taxon>
        <taxon>Conidae</taxon>
        <taxon>Conus</taxon>
        <taxon>Dendroconus</taxon>
    </lineage>
</organism>
<comment type="function">
    <text evidence="4">This toxin activates voltage-gated sodium channels. It shifts the voltage-dependence of activation to more hyperpolarized potentials but has only little effect on channel inactivation. It is active on Nav1.3/SCN3A (EC(50)=3.98 nM), Nav1.4/SCN4A (EC(50)=4.99 nM), Nav1.6/SCN8A (EC(50)=1.27 nM) and Nav1.7/SCN9A (EC(50)=2.42 nM) voltage-gated sodium channels. In vivo, it induces nocifensive or pain-like behaviors in mice when injected intraplantarly.</text>
</comment>
<comment type="subcellular location">
    <subcellularLocation>
        <location evidence="3">Secreted</location>
    </subcellularLocation>
</comment>
<comment type="tissue specificity">
    <text evidence="7">Expressed by the venom duct.</text>
</comment>
<comment type="domain">
    <text evidence="7">The cysteine framework is VI/VII (C-C-CC-C-C).</text>
</comment>
<comment type="domain">
    <text evidence="5">The presence of a 'disulfide through disulfide knot' structurally defines this protein as a knottin.</text>
</comment>
<comment type="similarity">
    <text evidence="7">Belongs to the conotoxin O1 superfamily.</text>
</comment>
<name>O164_CONBE</name>
<accession>M9PQ91</accession>
<proteinExistence type="inferred from homology"/>
<dbReference type="EMBL" id="JX000438">
    <property type="protein sequence ID" value="AGG19140.1"/>
    <property type="molecule type" value="mRNA"/>
</dbReference>
<dbReference type="SMR" id="M9PQ91"/>
<dbReference type="GO" id="GO:0005576">
    <property type="term" value="C:extracellular region"/>
    <property type="evidence" value="ECO:0007669"/>
    <property type="project" value="UniProtKB-SubCell"/>
</dbReference>
<dbReference type="GO" id="GO:0008200">
    <property type="term" value="F:ion channel inhibitor activity"/>
    <property type="evidence" value="ECO:0007669"/>
    <property type="project" value="InterPro"/>
</dbReference>
<dbReference type="GO" id="GO:0017080">
    <property type="term" value="F:sodium channel regulator activity"/>
    <property type="evidence" value="ECO:0007669"/>
    <property type="project" value="UniProtKB-KW"/>
</dbReference>
<dbReference type="GO" id="GO:0090729">
    <property type="term" value="F:toxin activity"/>
    <property type="evidence" value="ECO:0007669"/>
    <property type="project" value="UniProtKB-KW"/>
</dbReference>
<dbReference type="InterPro" id="IPR004214">
    <property type="entry name" value="Conotoxin"/>
</dbReference>
<dbReference type="Pfam" id="PF02950">
    <property type="entry name" value="Conotoxin"/>
    <property type="match status" value="1"/>
</dbReference>
<sequence>MKLTCMVIVAVLFLTAWTSVMADGSINRPDIAEGWQKFFSKARDEMKNRAASELNKRCAGIGSFCGLPGLVDCCSGRCFIVCLP</sequence>
<keyword id="KW-0165">Cleavage on pair of basic residues</keyword>
<keyword id="KW-1015">Disulfide bond</keyword>
<keyword id="KW-0872">Ion channel impairing toxin</keyword>
<keyword id="KW-0960">Knottin</keyword>
<keyword id="KW-0528">Neurotoxin</keyword>
<keyword id="KW-0964">Secreted</keyword>
<keyword id="KW-0732">Signal</keyword>
<keyword id="KW-0800">Toxin</keyword>
<keyword id="KW-0738">Voltage-gated sodium channel impairing toxin</keyword>